<dbReference type="EMBL" id="CP000247">
    <property type="protein sequence ID" value="ABG72096.1"/>
    <property type="molecule type" value="Genomic_DNA"/>
</dbReference>
<dbReference type="RefSeq" id="WP_001293344.1">
    <property type="nucleotide sequence ID" value="NC_008253.1"/>
</dbReference>
<dbReference type="SMR" id="Q0TAD3"/>
<dbReference type="KEGG" id="ecp:ECP_4140"/>
<dbReference type="HOGENOM" id="CLU_033123_0_0_6"/>
<dbReference type="Proteomes" id="UP000009182">
    <property type="component" value="Chromosome"/>
</dbReference>
<dbReference type="GO" id="GO:0009376">
    <property type="term" value="C:HslUV protease complex"/>
    <property type="evidence" value="ECO:0007669"/>
    <property type="project" value="UniProtKB-UniRule"/>
</dbReference>
<dbReference type="GO" id="GO:0005524">
    <property type="term" value="F:ATP binding"/>
    <property type="evidence" value="ECO:0007669"/>
    <property type="project" value="UniProtKB-UniRule"/>
</dbReference>
<dbReference type="GO" id="GO:0016887">
    <property type="term" value="F:ATP hydrolysis activity"/>
    <property type="evidence" value="ECO:0007669"/>
    <property type="project" value="InterPro"/>
</dbReference>
<dbReference type="GO" id="GO:0008233">
    <property type="term" value="F:peptidase activity"/>
    <property type="evidence" value="ECO:0007669"/>
    <property type="project" value="InterPro"/>
</dbReference>
<dbReference type="GO" id="GO:0036402">
    <property type="term" value="F:proteasome-activating activity"/>
    <property type="evidence" value="ECO:0007669"/>
    <property type="project" value="UniProtKB-UniRule"/>
</dbReference>
<dbReference type="GO" id="GO:0043335">
    <property type="term" value="P:protein unfolding"/>
    <property type="evidence" value="ECO:0007669"/>
    <property type="project" value="UniProtKB-UniRule"/>
</dbReference>
<dbReference type="GO" id="GO:0051603">
    <property type="term" value="P:proteolysis involved in protein catabolic process"/>
    <property type="evidence" value="ECO:0007669"/>
    <property type="project" value="TreeGrafter"/>
</dbReference>
<dbReference type="CDD" id="cd19498">
    <property type="entry name" value="RecA-like_HslU"/>
    <property type="match status" value="1"/>
</dbReference>
<dbReference type="FunFam" id="1.10.8.10:FF:000012">
    <property type="entry name" value="ATP-dependent protease ATPase subunit HslU"/>
    <property type="match status" value="1"/>
</dbReference>
<dbReference type="FunFam" id="1.10.8.10:FF:000028">
    <property type="entry name" value="ATP-dependent protease ATPase subunit HslU"/>
    <property type="match status" value="1"/>
</dbReference>
<dbReference type="FunFam" id="1.10.8.60:FF:000027">
    <property type="entry name" value="ATP-dependent protease ATPase subunit HslU"/>
    <property type="match status" value="1"/>
</dbReference>
<dbReference type="FunFam" id="3.40.50.300:FF:000213">
    <property type="entry name" value="ATP-dependent protease ATPase subunit HslU"/>
    <property type="match status" value="1"/>
</dbReference>
<dbReference type="FunFam" id="3.40.50.300:FF:000220">
    <property type="entry name" value="ATP-dependent protease ATPase subunit HslU"/>
    <property type="match status" value="1"/>
</dbReference>
<dbReference type="Gene3D" id="1.10.8.60">
    <property type="match status" value="1"/>
</dbReference>
<dbReference type="Gene3D" id="1.10.8.10">
    <property type="entry name" value="DNA helicase RuvA subunit, C-terminal domain"/>
    <property type="match status" value="2"/>
</dbReference>
<dbReference type="Gene3D" id="3.40.50.300">
    <property type="entry name" value="P-loop containing nucleotide triphosphate hydrolases"/>
    <property type="match status" value="1"/>
</dbReference>
<dbReference type="HAMAP" id="MF_00249">
    <property type="entry name" value="HslU"/>
    <property type="match status" value="1"/>
</dbReference>
<dbReference type="InterPro" id="IPR003593">
    <property type="entry name" value="AAA+_ATPase"/>
</dbReference>
<dbReference type="InterPro" id="IPR050052">
    <property type="entry name" value="ATP-dep_Clp_protease_ClpX"/>
</dbReference>
<dbReference type="InterPro" id="IPR003959">
    <property type="entry name" value="ATPase_AAA_core"/>
</dbReference>
<dbReference type="InterPro" id="IPR019489">
    <property type="entry name" value="Clp_ATPase_C"/>
</dbReference>
<dbReference type="InterPro" id="IPR004491">
    <property type="entry name" value="HslU"/>
</dbReference>
<dbReference type="InterPro" id="IPR027417">
    <property type="entry name" value="P-loop_NTPase"/>
</dbReference>
<dbReference type="NCBIfam" id="TIGR00390">
    <property type="entry name" value="hslU"/>
    <property type="match status" value="1"/>
</dbReference>
<dbReference type="NCBIfam" id="NF003544">
    <property type="entry name" value="PRK05201.1"/>
    <property type="match status" value="1"/>
</dbReference>
<dbReference type="PANTHER" id="PTHR48102">
    <property type="entry name" value="ATP-DEPENDENT CLP PROTEASE ATP-BINDING SUBUNIT CLPX-LIKE, MITOCHONDRIAL-RELATED"/>
    <property type="match status" value="1"/>
</dbReference>
<dbReference type="PANTHER" id="PTHR48102:SF3">
    <property type="entry name" value="ATP-DEPENDENT PROTEASE ATPASE SUBUNIT HSLU"/>
    <property type="match status" value="1"/>
</dbReference>
<dbReference type="Pfam" id="PF00004">
    <property type="entry name" value="AAA"/>
    <property type="match status" value="1"/>
</dbReference>
<dbReference type="Pfam" id="PF07724">
    <property type="entry name" value="AAA_2"/>
    <property type="match status" value="1"/>
</dbReference>
<dbReference type="SMART" id="SM00382">
    <property type="entry name" value="AAA"/>
    <property type="match status" value="1"/>
</dbReference>
<dbReference type="SMART" id="SM01086">
    <property type="entry name" value="ClpB_D2-small"/>
    <property type="match status" value="1"/>
</dbReference>
<dbReference type="SUPFAM" id="SSF52540">
    <property type="entry name" value="P-loop containing nucleoside triphosphate hydrolases"/>
    <property type="match status" value="1"/>
</dbReference>
<gene>
    <name evidence="1" type="primary">hslU</name>
    <name type="ordered locus">ECP_4140</name>
</gene>
<sequence>MSEMTPREIVSELDKHIIGQDNAKRSVAIALRNRWRRMQLNEELRHEVTPKNILMIGPTGVGKTEIARRLAKLANAPFIKVEATKFTEVGYVGKEVDSIIRDLTDAAVKMVRVQAIEKNRYRAEELAEERILDVLIPPAKNNWGQTEQQQEPSAARQAFRKKLREGQLDDKEIEIDLAAAPMGVEIMAPPGMEEMTSQLQSMFQNLGGQKQKARKLKIKDAMKLLIEEEAAKLVNPEELKQDAIDAVEQHGIVFIDEIDKICKRGESSGPDVSREGVQRDLLPLVEGCTVSTKHGMVKTDHILFIASGAFQIAKPSDLIPELQGRLPIRVELQALTTSDFERILTEPNASITVQYKALMATEGVNIEFTDSGIKRIAEAAWQVNESTENIGARRLHTVLERLMEEISYDASDLSGQTITIDADYVSKHLDALVADEDLSRFIL</sequence>
<accession>Q0TAD3</accession>
<organism>
    <name type="scientific">Escherichia coli O6:K15:H31 (strain 536 / UPEC)</name>
    <dbReference type="NCBI Taxonomy" id="362663"/>
    <lineage>
        <taxon>Bacteria</taxon>
        <taxon>Pseudomonadati</taxon>
        <taxon>Pseudomonadota</taxon>
        <taxon>Gammaproteobacteria</taxon>
        <taxon>Enterobacterales</taxon>
        <taxon>Enterobacteriaceae</taxon>
        <taxon>Escherichia</taxon>
    </lineage>
</organism>
<keyword id="KW-0067">ATP-binding</keyword>
<keyword id="KW-0143">Chaperone</keyword>
<keyword id="KW-0963">Cytoplasm</keyword>
<keyword id="KW-0547">Nucleotide-binding</keyword>
<keyword id="KW-0346">Stress response</keyword>
<reference key="1">
    <citation type="journal article" date="2006" name="Mol. Microbiol.">
        <title>Role of pathogenicity island-associated integrases in the genome plasticity of uropathogenic Escherichia coli strain 536.</title>
        <authorList>
            <person name="Hochhut B."/>
            <person name="Wilde C."/>
            <person name="Balling G."/>
            <person name="Middendorf B."/>
            <person name="Dobrindt U."/>
            <person name="Brzuszkiewicz E."/>
            <person name="Gottschalk G."/>
            <person name="Carniel E."/>
            <person name="Hacker J."/>
        </authorList>
    </citation>
    <scope>NUCLEOTIDE SEQUENCE [LARGE SCALE GENOMIC DNA]</scope>
    <source>
        <strain>536 / UPEC</strain>
    </source>
</reference>
<protein>
    <recommendedName>
        <fullName evidence="1">ATP-dependent protease ATPase subunit HslU</fullName>
    </recommendedName>
    <alternativeName>
        <fullName evidence="1">Heat shock protein HslU</fullName>
    </alternativeName>
    <alternativeName>
        <fullName evidence="1">Unfoldase HslU</fullName>
    </alternativeName>
</protein>
<name>HSLU_ECOL5</name>
<comment type="function">
    <text evidence="1">ATPase subunit of a proteasome-like degradation complex; this subunit has chaperone activity. The binding of ATP and its subsequent hydrolysis by HslU are essential for unfolding of protein substrates subsequently hydrolyzed by HslV. HslU recognizes the N-terminal part of its protein substrates and unfolds these before they are guided to HslV for hydrolysis.</text>
</comment>
<comment type="subunit">
    <text evidence="1">A double ring-shaped homohexamer of HslV is capped on each side by a ring-shaped HslU homohexamer. The assembly of the HslU/HslV complex is dependent on binding of ATP.</text>
</comment>
<comment type="subcellular location">
    <subcellularLocation>
        <location evidence="1">Cytoplasm</location>
    </subcellularLocation>
</comment>
<comment type="induction">
    <text evidence="1">By heat shock.</text>
</comment>
<comment type="similarity">
    <text evidence="1">Belongs to the ClpX chaperone family. HslU subfamily.</text>
</comment>
<proteinExistence type="inferred from homology"/>
<evidence type="ECO:0000255" key="1">
    <source>
        <dbReference type="HAMAP-Rule" id="MF_00249"/>
    </source>
</evidence>
<feature type="chain" id="PRO_1000012735" description="ATP-dependent protease ATPase subunit HslU">
    <location>
        <begin position="1"/>
        <end position="443"/>
    </location>
</feature>
<feature type="binding site" evidence="1">
    <location>
        <position position="18"/>
    </location>
    <ligand>
        <name>ATP</name>
        <dbReference type="ChEBI" id="CHEBI:30616"/>
    </ligand>
</feature>
<feature type="binding site" evidence="1">
    <location>
        <begin position="60"/>
        <end position="65"/>
    </location>
    <ligand>
        <name>ATP</name>
        <dbReference type="ChEBI" id="CHEBI:30616"/>
    </ligand>
</feature>
<feature type="binding site" evidence="1">
    <location>
        <position position="256"/>
    </location>
    <ligand>
        <name>ATP</name>
        <dbReference type="ChEBI" id="CHEBI:30616"/>
    </ligand>
</feature>
<feature type="binding site" evidence="1">
    <location>
        <position position="321"/>
    </location>
    <ligand>
        <name>ATP</name>
        <dbReference type="ChEBI" id="CHEBI:30616"/>
    </ligand>
</feature>
<feature type="binding site" evidence="1">
    <location>
        <position position="393"/>
    </location>
    <ligand>
        <name>ATP</name>
        <dbReference type="ChEBI" id="CHEBI:30616"/>
    </ligand>
</feature>